<sequence>MLNHFPGHCSNNIFCFPPIESETKSGKKASWIICVQVVQHNTIIPITDEMFSTDVKDAVAEIFTKFFVEEGTVRISKMTRITEGKNLGKKNATTVVHQAFKDALSKYNRHARQKRGAHTNRGMIPPMLVKYFNIIPKTFFEEETDPIVQRKRNGVRAVACQQGDGSILLYSRTEKEFLGLDNIKKELKQLYLFIDVRVYLDGELYLHRKPLQWIAGQANAKTDSSELHFYVFDCFWSDQLQMPSNKRQQLLTNIFKQKEDLTFIHQVENFSVKNEDEALRLKAQFIKEGYEGAIVRNVNGPYEPGYNNYHSAHLAKLKPLLDAEFILVDYTQGKKGKDLGAILWVCELPNKKRFVVTPKHLTYADRYALFQKLTPALFKKHLYGKELTVEYAELSPKTGIPLQARAVGFREPINVLEII</sequence>
<organism>
    <name type="scientific">African swine fever virus (isolate Tick/South Africa/Pretoriuskop Pr4/1996)</name>
    <name type="common">ASFV</name>
    <dbReference type="NCBI Taxonomy" id="561443"/>
    <lineage>
        <taxon>Viruses</taxon>
        <taxon>Varidnaviria</taxon>
        <taxon>Bamfordvirae</taxon>
        <taxon>Nucleocytoviricota</taxon>
        <taxon>Pokkesviricetes</taxon>
        <taxon>Asfuvirales</taxon>
        <taxon>Asfarviridae</taxon>
        <taxon>Asfivirus</taxon>
        <taxon>African swine fever virus</taxon>
    </lineage>
</organism>
<reference key="1">
    <citation type="submission" date="2003-03" db="EMBL/GenBank/DDBJ databases">
        <title>African swine fever virus genomes.</title>
        <authorList>
            <person name="Kutish G.F."/>
            <person name="Rock D.L."/>
        </authorList>
    </citation>
    <scope>NUCLEOTIDE SEQUENCE [GENOMIC DNA]</scope>
</reference>
<gene>
    <name type="ordered locus">Pret-112</name>
</gene>
<proteinExistence type="inferred from homology"/>
<name>DNLI_ASFP4</name>
<keyword id="KW-0067">ATP-binding</keyword>
<keyword id="KW-0131">Cell cycle</keyword>
<keyword id="KW-0132">Cell division</keyword>
<keyword id="KW-0227">DNA damage</keyword>
<keyword id="KW-0233">DNA recombination</keyword>
<keyword id="KW-0234">DNA repair</keyword>
<keyword id="KW-0235">DNA replication</keyword>
<keyword id="KW-0436">Ligase</keyword>
<keyword id="KW-0479">Metal-binding</keyword>
<keyword id="KW-0547">Nucleotide-binding</keyword>
<keyword id="KW-0946">Virion</keyword>
<organismHost>
    <name type="scientific">Ornithodoros</name>
    <name type="common">relapsing fever ticks</name>
    <dbReference type="NCBI Taxonomy" id="6937"/>
</organismHost>
<organismHost>
    <name type="scientific">Phacochoerus aethiopicus</name>
    <name type="common">Warthog</name>
    <dbReference type="NCBI Taxonomy" id="85517"/>
</organismHost>
<organismHost>
    <name type="scientific">Phacochoerus africanus</name>
    <name type="common">Warthog</name>
    <dbReference type="NCBI Taxonomy" id="41426"/>
</organismHost>
<organismHost>
    <name type="scientific">Potamochoerus larvatus</name>
    <name type="common">Bushpig</name>
    <dbReference type="NCBI Taxonomy" id="273792"/>
</organismHost>
<organismHost>
    <name type="scientific">Sus scrofa</name>
    <name type="common">Pig</name>
    <dbReference type="NCBI Taxonomy" id="9823"/>
</organismHost>
<dbReference type="EC" id="6.5.1.1" evidence="3"/>
<dbReference type="EMBL" id="AY261363">
    <property type="status" value="NOT_ANNOTATED_CDS"/>
    <property type="molecule type" value="Genomic_DNA"/>
</dbReference>
<dbReference type="SMR" id="P0C990"/>
<dbReference type="Proteomes" id="UP000000859">
    <property type="component" value="Segment"/>
</dbReference>
<dbReference type="GO" id="GO:0044423">
    <property type="term" value="C:virion component"/>
    <property type="evidence" value="ECO:0007669"/>
    <property type="project" value="UniProtKB-KW"/>
</dbReference>
<dbReference type="GO" id="GO:0005524">
    <property type="term" value="F:ATP binding"/>
    <property type="evidence" value="ECO:0007669"/>
    <property type="project" value="UniProtKB-KW"/>
</dbReference>
<dbReference type="GO" id="GO:0003910">
    <property type="term" value="F:DNA ligase (ATP) activity"/>
    <property type="evidence" value="ECO:0007669"/>
    <property type="project" value="UniProtKB-EC"/>
</dbReference>
<dbReference type="GO" id="GO:0046872">
    <property type="term" value="F:metal ion binding"/>
    <property type="evidence" value="ECO:0007669"/>
    <property type="project" value="UniProtKB-KW"/>
</dbReference>
<dbReference type="GO" id="GO:0051301">
    <property type="term" value="P:cell division"/>
    <property type="evidence" value="ECO:0007669"/>
    <property type="project" value="UniProtKB-KW"/>
</dbReference>
<dbReference type="GO" id="GO:0006310">
    <property type="term" value="P:DNA recombination"/>
    <property type="evidence" value="ECO:0007669"/>
    <property type="project" value="UniProtKB-KW"/>
</dbReference>
<dbReference type="GO" id="GO:0006281">
    <property type="term" value="P:DNA repair"/>
    <property type="evidence" value="ECO:0007669"/>
    <property type="project" value="UniProtKB-KW"/>
</dbReference>
<dbReference type="GO" id="GO:0006260">
    <property type="term" value="P:DNA replication"/>
    <property type="evidence" value="ECO:0007669"/>
    <property type="project" value="UniProtKB-KW"/>
</dbReference>
<dbReference type="Gene3D" id="3.30.470.30">
    <property type="entry name" value="DNA ligase/mRNA capping enzyme"/>
    <property type="match status" value="1"/>
</dbReference>
<dbReference type="InterPro" id="IPR012310">
    <property type="entry name" value="DNA_ligase_ATP-dep_cent"/>
</dbReference>
<dbReference type="InterPro" id="IPR016059">
    <property type="entry name" value="DNA_ligase_ATP-dep_CS"/>
</dbReference>
<dbReference type="InterPro" id="IPR012340">
    <property type="entry name" value="NA-bd_OB-fold"/>
</dbReference>
<dbReference type="InterPro" id="IPR050326">
    <property type="entry name" value="NAD_dep_DNA_ligaseB"/>
</dbReference>
<dbReference type="PANTHER" id="PTHR47810">
    <property type="entry name" value="DNA LIGASE"/>
    <property type="match status" value="1"/>
</dbReference>
<dbReference type="PANTHER" id="PTHR47810:SF5">
    <property type="entry name" value="LIGASE, PUTATIVE-RELATED"/>
    <property type="match status" value="1"/>
</dbReference>
<dbReference type="Pfam" id="PF01068">
    <property type="entry name" value="DNA_ligase_A_M"/>
    <property type="match status" value="1"/>
</dbReference>
<dbReference type="SUPFAM" id="SSF56091">
    <property type="entry name" value="DNA ligase/mRNA capping enzyme, catalytic domain"/>
    <property type="match status" value="1"/>
</dbReference>
<dbReference type="SUPFAM" id="SSF50249">
    <property type="entry name" value="Nucleic acid-binding proteins"/>
    <property type="match status" value="1"/>
</dbReference>
<dbReference type="PROSITE" id="PS00697">
    <property type="entry name" value="DNA_LIGASE_A1"/>
    <property type="match status" value="1"/>
</dbReference>
<dbReference type="PROSITE" id="PS00333">
    <property type="entry name" value="DNA_LIGASE_A2"/>
    <property type="match status" value="1"/>
</dbReference>
<dbReference type="PROSITE" id="PS50160">
    <property type="entry name" value="DNA_LIGASE_A3"/>
    <property type="match status" value="1"/>
</dbReference>
<feature type="chain" id="PRO_0000373089" description="DNA ligase">
    <location>
        <begin position="1"/>
        <end position="419"/>
    </location>
</feature>
<feature type="region of interest" description="NTD" evidence="2">
    <location>
        <begin position="1"/>
        <end position="120"/>
    </location>
</feature>
<feature type="region of interest" description="AD domain" evidence="2">
    <location>
        <begin position="121"/>
        <end position="317"/>
    </location>
</feature>
<feature type="region of interest" description="OB domain" evidence="2">
    <location>
        <begin position="318"/>
        <end position="419"/>
    </location>
</feature>
<feature type="active site" description="N6-AMP-lysine intermediate" evidence="3">
    <location>
        <position position="151"/>
    </location>
</feature>
<feature type="binding site" evidence="2">
    <location>
        <position position="151"/>
    </location>
    <ligand>
        <name>ATP</name>
        <dbReference type="ChEBI" id="CHEBI:30616"/>
    </ligand>
</feature>
<feature type="binding site" evidence="1">
    <location>
        <position position="203"/>
    </location>
    <ligand>
        <name>a divalent metal cation</name>
        <dbReference type="ChEBI" id="CHEBI:60240"/>
        <label>1</label>
    </ligand>
</feature>
<feature type="binding site" evidence="2">
    <location>
        <position position="203"/>
    </location>
    <ligand>
        <name>ATP</name>
        <dbReference type="ChEBI" id="CHEBI:30616"/>
    </ligand>
</feature>
<feature type="binding site" evidence="2">
    <location>
        <position position="232"/>
    </location>
    <ligand>
        <name>ATP</name>
        <dbReference type="ChEBI" id="CHEBI:30616"/>
    </ligand>
</feature>
<feature type="binding site" evidence="1">
    <location>
        <position position="291"/>
    </location>
    <ligand>
        <name>a divalent metal cation</name>
        <dbReference type="ChEBI" id="CHEBI:60240"/>
        <label>2</label>
    </ligand>
</feature>
<feature type="binding site" evidence="2">
    <location>
        <position position="294"/>
    </location>
    <ligand>
        <name>ATP</name>
        <dbReference type="ChEBI" id="CHEBI:30616"/>
    </ligand>
</feature>
<feature type="binding site" evidence="2">
    <location>
        <position position="316"/>
    </location>
    <ligand>
        <name>ATP</name>
        <dbReference type="ChEBI" id="CHEBI:30616"/>
    </ligand>
</feature>
<feature type="site" description="Important for the catalytic efficiency" evidence="2">
    <location>
        <position position="153"/>
    </location>
</feature>
<feature type="site" description="Important for the catalytic efficiency" evidence="2">
    <location>
        <position position="211"/>
    </location>
</feature>
<feature type="site" description="Important for the catalytic efficiency" evidence="2">
    <location>
        <position position="402"/>
    </location>
</feature>
<feature type="site" description="Important for the catalytic efficiency" evidence="2">
    <location>
        <position position="403"/>
    </location>
</feature>
<accession>P0C990</accession>
<protein>
    <recommendedName>
        <fullName evidence="2">DNA ligase</fullName>
        <ecNumber evidence="3">6.5.1.1</ecNumber>
    </recommendedName>
    <alternativeName>
        <fullName>Polydeoxyribonucleotide synthase [ATP]</fullName>
    </alternativeName>
</protein>
<evidence type="ECO:0000250" key="1"/>
<evidence type="ECO:0000250" key="2">
    <source>
        <dbReference type="UniProtKB" id="P35970"/>
    </source>
</evidence>
<evidence type="ECO:0000255" key="3">
    <source>
        <dbReference type="PROSITE-ProRule" id="PRU10135"/>
    </source>
</evidence>
<evidence type="ECO:0000305" key="4"/>
<comment type="function">
    <text evidence="2">Very low-fidelity DNA ligase that seals nicks in double-stranded DNA during DNA repair (By similarity). Together with the viral repair DNA polymerase X, fills the single nucleotide gaps generated by the AP endonuclease (By similarity). It is not essential for viral replication and recombination (By similarity). Displays a very low adenylation activity towards DNA with 3'-dideoxy- or 3'-amino-terminated nicks compared to regular nick DNA (By similarity).</text>
</comment>
<comment type="catalytic activity">
    <reaction evidence="3">
        <text>ATP + (deoxyribonucleotide)n-3'-hydroxyl + 5'-phospho-(deoxyribonucleotide)m = (deoxyribonucleotide)n+m + AMP + diphosphate.</text>
        <dbReference type="EC" id="6.5.1.1"/>
    </reaction>
</comment>
<comment type="subcellular location">
    <subcellularLocation>
        <location evidence="2">Virion</location>
    </subcellularLocation>
    <text evidence="2">Found in association with the viral nucleoid.</text>
</comment>
<comment type="domain">
    <text evidence="2">The N-terminus domain (NTD) plays a critical role in DNA-binding, catalytic complex assembly and catalysis.</text>
</comment>
<comment type="miscellaneous">
    <text>Consistent with its intracellular location, ASFV encodes its own replicative DNA polymerase and three base excision repair enzymes: a class II AP endonuclease, the repair polymerase Pol X, and an ATP-dependent DNA ligase.</text>
</comment>
<comment type="similarity">
    <text evidence="4">Belongs to the ATP-dependent DNA ligase family.</text>
</comment>